<evidence type="ECO:0000255" key="1">
    <source>
        <dbReference type="HAMAP-Rule" id="MF_01007"/>
    </source>
</evidence>
<evidence type="ECO:0000256" key="2">
    <source>
        <dbReference type="SAM" id="MobiDB-lite"/>
    </source>
</evidence>
<comment type="function">
    <text evidence="1">Specifically methylates the N4 position of cytidine in position 1402 (C1402) of 16S rRNA.</text>
</comment>
<comment type="catalytic activity">
    <reaction evidence="1">
        <text>cytidine(1402) in 16S rRNA + S-adenosyl-L-methionine = N(4)-methylcytidine(1402) in 16S rRNA + S-adenosyl-L-homocysteine + H(+)</text>
        <dbReference type="Rhea" id="RHEA:42928"/>
        <dbReference type="Rhea" id="RHEA-COMP:10286"/>
        <dbReference type="Rhea" id="RHEA-COMP:10287"/>
        <dbReference type="ChEBI" id="CHEBI:15378"/>
        <dbReference type="ChEBI" id="CHEBI:57856"/>
        <dbReference type="ChEBI" id="CHEBI:59789"/>
        <dbReference type="ChEBI" id="CHEBI:74506"/>
        <dbReference type="ChEBI" id="CHEBI:82748"/>
        <dbReference type="EC" id="2.1.1.199"/>
    </reaction>
</comment>
<comment type="subcellular location">
    <subcellularLocation>
        <location evidence="1">Cytoplasm</location>
    </subcellularLocation>
</comment>
<comment type="similarity">
    <text evidence="1">Belongs to the methyltransferase superfamily. RsmH family.</text>
</comment>
<dbReference type="EC" id="2.1.1.199" evidence="1"/>
<dbReference type="EMBL" id="CP000478">
    <property type="protein sequence ID" value="ABK19134.1"/>
    <property type="molecule type" value="Genomic_DNA"/>
</dbReference>
<dbReference type="RefSeq" id="WP_011700259.1">
    <property type="nucleotide sequence ID" value="NC_008554.1"/>
</dbReference>
<dbReference type="SMR" id="A0LNY2"/>
<dbReference type="FunCoup" id="A0LNY2">
    <property type="interactions" value="564"/>
</dbReference>
<dbReference type="STRING" id="335543.Sfum_3463"/>
<dbReference type="KEGG" id="sfu:Sfum_3463"/>
<dbReference type="eggNOG" id="COG0275">
    <property type="taxonomic scope" value="Bacteria"/>
</dbReference>
<dbReference type="HOGENOM" id="CLU_038422_3_0_7"/>
<dbReference type="InParanoid" id="A0LNY2"/>
<dbReference type="OrthoDB" id="9806637at2"/>
<dbReference type="Proteomes" id="UP000001784">
    <property type="component" value="Chromosome"/>
</dbReference>
<dbReference type="GO" id="GO:0005737">
    <property type="term" value="C:cytoplasm"/>
    <property type="evidence" value="ECO:0007669"/>
    <property type="project" value="UniProtKB-SubCell"/>
</dbReference>
<dbReference type="GO" id="GO:0071424">
    <property type="term" value="F:rRNA (cytosine-N4-)-methyltransferase activity"/>
    <property type="evidence" value="ECO:0007669"/>
    <property type="project" value="UniProtKB-UniRule"/>
</dbReference>
<dbReference type="GO" id="GO:0070475">
    <property type="term" value="P:rRNA base methylation"/>
    <property type="evidence" value="ECO:0007669"/>
    <property type="project" value="UniProtKB-UniRule"/>
</dbReference>
<dbReference type="Gene3D" id="1.10.150.170">
    <property type="entry name" value="Putative methyltransferase TM0872, insert domain"/>
    <property type="match status" value="1"/>
</dbReference>
<dbReference type="Gene3D" id="3.40.50.150">
    <property type="entry name" value="Vaccinia Virus protein VP39"/>
    <property type="match status" value="1"/>
</dbReference>
<dbReference type="HAMAP" id="MF_01007">
    <property type="entry name" value="16SrRNA_methyltr_H"/>
    <property type="match status" value="1"/>
</dbReference>
<dbReference type="InterPro" id="IPR002903">
    <property type="entry name" value="RsmH"/>
</dbReference>
<dbReference type="InterPro" id="IPR023397">
    <property type="entry name" value="SAM-dep_MeTrfase_MraW_recog"/>
</dbReference>
<dbReference type="InterPro" id="IPR029063">
    <property type="entry name" value="SAM-dependent_MTases_sf"/>
</dbReference>
<dbReference type="NCBIfam" id="TIGR00006">
    <property type="entry name" value="16S rRNA (cytosine(1402)-N(4))-methyltransferase RsmH"/>
    <property type="match status" value="1"/>
</dbReference>
<dbReference type="PANTHER" id="PTHR11265:SF0">
    <property type="entry name" value="12S RRNA N4-METHYLCYTIDINE METHYLTRANSFERASE"/>
    <property type="match status" value="1"/>
</dbReference>
<dbReference type="PANTHER" id="PTHR11265">
    <property type="entry name" value="S-ADENOSYL-METHYLTRANSFERASE MRAW"/>
    <property type="match status" value="1"/>
</dbReference>
<dbReference type="Pfam" id="PF01795">
    <property type="entry name" value="Methyltransf_5"/>
    <property type="match status" value="1"/>
</dbReference>
<dbReference type="PIRSF" id="PIRSF004486">
    <property type="entry name" value="MraW"/>
    <property type="match status" value="1"/>
</dbReference>
<dbReference type="SUPFAM" id="SSF81799">
    <property type="entry name" value="Putative methyltransferase TM0872, insert domain"/>
    <property type="match status" value="1"/>
</dbReference>
<dbReference type="SUPFAM" id="SSF53335">
    <property type="entry name" value="S-adenosyl-L-methionine-dependent methyltransferases"/>
    <property type="match status" value="1"/>
</dbReference>
<name>RSMH_SYNFM</name>
<protein>
    <recommendedName>
        <fullName evidence="1">Ribosomal RNA small subunit methyltransferase H</fullName>
        <ecNumber evidence="1">2.1.1.199</ecNumber>
    </recommendedName>
    <alternativeName>
        <fullName evidence="1">16S rRNA m(4)C1402 methyltransferase</fullName>
    </alternativeName>
    <alternativeName>
        <fullName evidence="1">rRNA (cytosine-N(4)-)-methyltransferase RsmH</fullName>
    </alternativeName>
</protein>
<organism>
    <name type="scientific">Syntrophobacter fumaroxidans (strain DSM 10017 / MPOB)</name>
    <dbReference type="NCBI Taxonomy" id="335543"/>
    <lineage>
        <taxon>Bacteria</taxon>
        <taxon>Pseudomonadati</taxon>
        <taxon>Thermodesulfobacteriota</taxon>
        <taxon>Syntrophobacteria</taxon>
        <taxon>Syntrophobacterales</taxon>
        <taxon>Syntrophobacteraceae</taxon>
        <taxon>Syntrophobacter</taxon>
    </lineage>
</organism>
<accession>A0LNY2</accession>
<keyword id="KW-0963">Cytoplasm</keyword>
<keyword id="KW-0489">Methyltransferase</keyword>
<keyword id="KW-1185">Reference proteome</keyword>
<keyword id="KW-0698">rRNA processing</keyword>
<keyword id="KW-0949">S-adenosyl-L-methionine</keyword>
<keyword id="KW-0808">Transferase</keyword>
<sequence>MEPGPALEHIPVMLEQALELLACRRGGVYVDGTVGGGGYSEAILRASAPDGILLGVDWDAEAIGRAAGRLSAYGRRAILTKAGFAELPEVLPRHGFAQVDGIVLDLGVSAFQIDDAARGFSFTKDGPLDMRMDPGLPQTAADMVNTLPEKDLADLIFRLGEERWSRRIARAVVERRRERPFQRTLELADTVAATVPATRDSRRIHPATRTFLALRLAVNQELESLERFLSGALDLLKTGGRLCVVSFHSLEDRMVKGQFKEWAKSCRCPREAVLCRCEGRPLVRLLTRKAVRPDEREKERNPRSRSARLRAVEKQGVPA</sequence>
<gene>
    <name evidence="1" type="primary">rsmH</name>
    <name type="synonym">mraW</name>
    <name type="ordered locus">Sfum_3463</name>
</gene>
<reference key="1">
    <citation type="submission" date="2006-10" db="EMBL/GenBank/DDBJ databases">
        <title>Complete sequence of Syntrophobacter fumaroxidans MPOB.</title>
        <authorList>
            <consortium name="US DOE Joint Genome Institute"/>
            <person name="Copeland A."/>
            <person name="Lucas S."/>
            <person name="Lapidus A."/>
            <person name="Barry K."/>
            <person name="Detter J.C."/>
            <person name="Glavina del Rio T."/>
            <person name="Hammon N."/>
            <person name="Israni S."/>
            <person name="Pitluck S."/>
            <person name="Goltsman E.G."/>
            <person name="Martinez M."/>
            <person name="Schmutz J."/>
            <person name="Larimer F."/>
            <person name="Land M."/>
            <person name="Hauser L."/>
            <person name="Kyrpides N."/>
            <person name="Kim E."/>
            <person name="Boone D.R."/>
            <person name="Brockman F."/>
            <person name="Culley D."/>
            <person name="Ferry J."/>
            <person name="Gunsalus R."/>
            <person name="McInerney M.J."/>
            <person name="Morrison M."/>
            <person name="Plugge C."/>
            <person name="Rohlin L."/>
            <person name="Scholten J."/>
            <person name="Sieber J."/>
            <person name="Stams A.J.M."/>
            <person name="Worm P."/>
            <person name="Henstra A.M."/>
            <person name="Richardson P."/>
        </authorList>
    </citation>
    <scope>NUCLEOTIDE SEQUENCE [LARGE SCALE GENOMIC DNA]</scope>
    <source>
        <strain>DSM 10017 / MPOB</strain>
    </source>
</reference>
<feature type="chain" id="PRO_0000318882" description="Ribosomal RNA small subunit methyltransferase H">
    <location>
        <begin position="1"/>
        <end position="319"/>
    </location>
</feature>
<feature type="region of interest" description="Disordered" evidence="2">
    <location>
        <begin position="292"/>
        <end position="319"/>
    </location>
</feature>
<feature type="compositionally biased region" description="Basic and acidic residues" evidence="2">
    <location>
        <begin position="292"/>
        <end position="302"/>
    </location>
</feature>
<feature type="binding site" evidence="1">
    <location>
        <begin position="37"/>
        <end position="39"/>
    </location>
    <ligand>
        <name>S-adenosyl-L-methionine</name>
        <dbReference type="ChEBI" id="CHEBI:59789"/>
    </ligand>
</feature>
<feature type="binding site" evidence="1">
    <location>
        <position position="57"/>
    </location>
    <ligand>
        <name>S-adenosyl-L-methionine</name>
        <dbReference type="ChEBI" id="CHEBI:59789"/>
    </ligand>
</feature>
<feature type="binding site" evidence="1">
    <location>
        <position position="96"/>
    </location>
    <ligand>
        <name>S-adenosyl-L-methionine</name>
        <dbReference type="ChEBI" id="CHEBI:59789"/>
    </ligand>
</feature>
<feature type="binding site" evidence="1">
    <location>
        <position position="105"/>
    </location>
    <ligand>
        <name>S-adenosyl-L-methionine</name>
        <dbReference type="ChEBI" id="CHEBI:59789"/>
    </ligand>
</feature>
<feature type="binding site" evidence="1">
    <location>
        <position position="112"/>
    </location>
    <ligand>
        <name>S-adenosyl-L-methionine</name>
        <dbReference type="ChEBI" id="CHEBI:59789"/>
    </ligand>
</feature>
<proteinExistence type="inferred from homology"/>